<evidence type="ECO:0000255" key="1">
    <source>
        <dbReference type="HAMAP-Rule" id="MF_00137"/>
    </source>
</evidence>
<name>PUR7_CHLAA</name>
<comment type="catalytic activity">
    <reaction evidence="1">
        <text>5-amino-1-(5-phospho-D-ribosyl)imidazole-4-carboxylate + L-aspartate + ATP = (2S)-2-[5-amino-1-(5-phospho-beta-D-ribosyl)imidazole-4-carboxamido]succinate + ADP + phosphate + 2 H(+)</text>
        <dbReference type="Rhea" id="RHEA:22628"/>
        <dbReference type="ChEBI" id="CHEBI:15378"/>
        <dbReference type="ChEBI" id="CHEBI:29991"/>
        <dbReference type="ChEBI" id="CHEBI:30616"/>
        <dbReference type="ChEBI" id="CHEBI:43474"/>
        <dbReference type="ChEBI" id="CHEBI:58443"/>
        <dbReference type="ChEBI" id="CHEBI:77657"/>
        <dbReference type="ChEBI" id="CHEBI:456216"/>
        <dbReference type="EC" id="6.3.2.6"/>
    </reaction>
</comment>
<comment type="pathway">
    <text evidence="1">Purine metabolism; IMP biosynthesis via de novo pathway; 5-amino-1-(5-phospho-D-ribosyl)imidazole-4-carboxamide from 5-amino-1-(5-phospho-D-ribosyl)imidazole-4-carboxylate: step 1/2.</text>
</comment>
<comment type="similarity">
    <text evidence="1">Belongs to the SAICAR synthetase family.</text>
</comment>
<keyword id="KW-0067">ATP-binding</keyword>
<keyword id="KW-0436">Ligase</keyword>
<keyword id="KW-0547">Nucleotide-binding</keyword>
<keyword id="KW-0658">Purine biosynthesis</keyword>
<keyword id="KW-1185">Reference proteome</keyword>
<gene>
    <name evidence="1" type="primary">purC</name>
    <name type="ordered locus">Caur_1261</name>
</gene>
<sequence length="249" mass="27579">MELGYVLTEGKTKIVYAHPTDPDLAILYHKDGITAGDGARRSVIEGKGELAGQTTANVFRLLNRAGIATHFVDAPEPRLTVVRRCRMIPLEVVMRRLPAGSYLRRHPEAAGQRFDPPLVEFFLKDDARHDPQIAPQEIIAQGIATPAEVEQMTDTGRKVFVTLEAAWQQLDVTLVDLKIEFGRTAQGDLLVADVIDNDSWRIWPSGDPAQMLDKQVYRNAQVVDEALLADVRARYALVAELTGRWGAGS</sequence>
<organism>
    <name type="scientific">Chloroflexus aurantiacus (strain ATCC 29366 / DSM 635 / J-10-fl)</name>
    <dbReference type="NCBI Taxonomy" id="324602"/>
    <lineage>
        <taxon>Bacteria</taxon>
        <taxon>Bacillati</taxon>
        <taxon>Chloroflexota</taxon>
        <taxon>Chloroflexia</taxon>
        <taxon>Chloroflexales</taxon>
        <taxon>Chloroflexineae</taxon>
        <taxon>Chloroflexaceae</taxon>
        <taxon>Chloroflexus</taxon>
    </lineage>
</organism>
<protein>
    <recommendedName>
        <fullName evidence="1">Phosphoribosylaminoimidazole-succinocarboxamide synthase</fullName>
        <ecNumber evidence="1">6.3.2.6</ecNumber>
    </recommendedName>
    <alternativeName>
        <fullName evidence="1">SAICAR synthetase</fullName>
    </alternativeName>
</protein>
<accession>A9WK38</accession>
<reference key="1">
    <citation type="journal article" date="2011" name="BMC Genomics">
        <title>Complete genome sequence of the filamentous anoxygenic phototrophic bacterium Chloroflexus aurantiacus.</title>
        <authorList>
            <person name="Tang K.H."/>
            <person name="Barry K."/>
            <person name="Chertkov O."/>
            <person name="Dalin E."/>
            <person name="Han C.S."/>
            <person name="Hauser L.J."/>
            <person name="Honchak B.M."/>
            <person name="Karbach L.E."/>
            <person name="Land M.L."/>
            <person name="Lapidus A."/>
            <person name="Larimer F.W."/>
            <person name="Mikhailova N."/>
            <person name="Pitluck S."/>
            <person name="Pierson B.K."/>
            <person name="Blankenship R.E."/>
        </authorList>
    </citation>
    <scope>NUCLEOTIDE SEQUENCE [LARGE SCALE GENOMIC DNA]</scope>
    <source>
        <strain>ATCC 29366 / DSM 635 / J-10-fl</strain>
    </source>
</reference>
<dbReference type="EC" id="6.3.2.6" evidence="1"/>
<dbReference type="EMBL" id="CP000909">
    <property type="protein sequence ID" value="ABY34489.1"/>
    <property type="molecule type" value="Genomic_DNA"/>
</dbReference>
<dbReference type="RefSeq" id="WP_012257145.1">
    <property type="nucleotide sequence ID" value="NC_010175.1"/>
</dbReference>
<dbReference type="RefSeq" id="YP_001634878.1">
    <property type="nucleotide sequence ID" value="NC_010175.1"/>
</dbReference>
<dbReference type="SMR" id="A9WK38"/>
<dbReference type="FunCoup" id="A9WK38">
    <property type="interactions" value="422"/>
</dbReference>
<dbReference type="STRING" id="324602.Caur_1261"/>
<dbReference type="EnsemblBacteria" id="ABY34489">
    <property type="protein sequence ID" value="ABY34489"/>
    <property type="gene ID" value="Caur_1261"/>
</dbReference>
<dbReference type="KEGG" id="cau:Caur_1261"/>
<dbReference type="PATRIC" id="fig|324602.8.peg.1448"/>
<dbReference type="eggNOG" id="COG0152">
    <property type="taxonomic scope" value="Bacteria"/>
</dbReference>
<dbReference type="HOGENOM" id="CLU_061495_1_1_0"/>
<dbReference type="InParanoid" id="A9WK38"/>
<dbReference type="UniPathway" id="UPA00074">
    <property type="reaction ID" value="UER00131"/>
</dbReference>
<dbReference type="Proteomes" id="UP000002008">
    <property type="component" value="Chromosome"/>
</dbReference>
<dbReference type="GO" id="GO:0005524">
    <property type="term" value="F:ATP binding"/>
    <property type="evidence" value="ECO:0007669"/>
    <property type="project" value="UniProtKB-KW"/>
</dbReference>
<dbReference type="GO" id="GO:0004639">
    <property type="term" value="F:phosphoribosylaminoimidazolesuccinocarboxamide synthase activity"/>
    <property type="evidence" value="ECO:0007669"/>
    <property type="project" value="UniProtKB-UniRule"/>
</dbReference>
<dbReference type="GO" id="GO:0006189">
    <property type="term" value="P:'de novo' IMP biosynthetic process"/>
    <property type="evidence" value="ECO:0007669"/>
    <property type="project" value="UniProtKB-UniRule"/>
</dbReference>
<dbReference type="CDD" id="cd01416">
    <property type="entry name" value="SAICAR_synt_Ade5"/>
    <property type="match status" value="1"/>
</dbReference>
<dbReference type="FunFam" id="3.30.200.20:FF:000865">
    <property type="entry name" value="Phosphoribosylaminoimidazole-succinocarboxamide synthase"/>
    <property type="match status" value="1"/>
</dbReference>
<dbReference type="FunFam" id="3.30.470.20:FF:000020">
    <property type="entry name" value="Probable multifunctional protein ADE2"/>
    <property type="match status" value="1"/>
</dbReference>
<dbReference type="Gene3D" id="3.30.470.20">
    <property type="entry name" value="ATP-grasp fold, B domain"/>
    <property type="match status" value="1"/>
</dbReference>
<dbReference type="Gene3D" id="3.30.200.20">
    <property type="entry name" value="Phosphorylase Kinase, domain 1"/>
    <property type="match status" value="1"/>
</dbReference>
<dbReference type="HAMAP" id="MF_00137">
    <property type="entry name" value="SAICAR_synth"/>
    <property type="match status" value="1"/>
</dbReference>
<dbReference type="InterPro" id="IPR028923">
    <property type="entry name" value="SAICAR_synt/ADE2_N"/>
</dbReference>
<dbReference type="InterPro" id="IPR050089">
    <property type="entry name" value="SAICAR_synthetase"/>
</dbReference>
<dbReference type="InterPro" id="IPR018236">
    <property type="entry name" value="SAICAR_synthetase_CS"/>
</dbReference>
<dbReference type="PANTHER" id="PTHR43599">
    <property type="entry name" value="MULTIFUNCTIONAL PROTEIN ADE2"/>
    <property type="match status" value="1"/>
</dbReference>
<dbReference type="PANTHER" id="PTHR43599:SF3">
    <property type="entry name" value="SI:DKEY-6E2.2"/>
    <property type="match status" value="1"/>
</dbReference>
<dbReference type="Pfam" id="PF01259">
    <property type="entry name" value="SAICAR_synt"/>
    <property type="match status" value="1"/>
</dbReference>
<dbReference type="SUPFAM" id="SSF56104">
    <property type="entry name" value="SAICAR synthase-like"/>
    <property type="match status" value="1"/>
</dbReference>
<dbReference type="PROSITE" id="PS01058">
    <property type="entry name" value="SAICAR_SYNTHETASE_2"/>
    <property type="match status" value="1"/>
</dbReference>
<feature type="chain" id="PRO_1000076448" description="Phosphoribosylaminoimidazole-succinocarboxamide synthase">
    <location>
        <begin position="1"/>
        <end position="249"/>
    </location>
</feature>
<proteinExistence type="inferred from homology"/>